<name>BRLA_METRA</name>
<protein>
    <recommendedName>
        <fullName evidence="5">C2H2 type master regulator of conidiophore development BrlA</fullName>
    </recommendedName>
</protein>
<organism>
    <name type="scientific">Metarhizium robertsii (strain ARSEF 23 / ATCC MYA-3075)</name>
    <name type="common">Metarhizium anisopliae (strain ARSEF 23)</name>
    <dbReference type="NCBI Taxonomy" id="655844"/>
    <lineage>
        <taxon>Eukaryota</taxon>
        <taxon>Fungi</taxon>
        <taxon>Dikarya</taxon>
        <taxon>Ascomycota</taxon>
        <taxon>Pezizomycotina</taxon>
        <taxon>Sordariomycetes</taxon>
        <taxon>Hypocreomycetidae</taxon>
        <taxon>Hypocreales</taxon>
        <taxon>Clavicipitaceae</taxon>
        <taxon>Metarhizium</taxon>
    </lineage>
</organism>
<accession>A0A0B2XG51</accession>
<keyword id="KW-0010">Activator</keyword>
<keyword id="KW-0183">Conidiation</keyword>
<keyword id="KW-0238">DNA-binding</keyword>
<keyword id="KW-0479">Metal-binding</keyword>
<keyword id="KW-0539">Nucleus</keyword>
<keyword id="KW-0677">Repeat</keyword>
<keyword id="KW-0749">Sporulation</keyword>
<keyword id="KW-0804">Transcription</keyword>
<keyword id="KW-0805">Transcription regulation</keyword>
<keyword id="KW-0862">Zinc</keyword>
<keyword id="KW-0863">Zinc-finger</keyword>
<comment type="function">
    <text evidence="4">BrlA, abaA and wetA are pivotal regulators of conidiophore development and conidium maturation. They act individually and together to regulate their own expression and that of numerous other sporulation-specific genes (PubMed:29958281). BrlA, abaA and wetA act together to positively regulate the expression of the Pks1 gene cluster that mediates the biosynthesis of an anthraquinone derivative pigment that contributes to conidial pigmentation that provides protection from UV radiation, heat and cold stress (PubMed:29958281).</text>
</comment>
<comment type="subcellular location">
    <subcellularLocation>
        <location evidence="6">Nucleus</location>
    </subcellularLocation>
</comment>
<comment type="induction">
    <text evidence="4">Expression remains constant during conidiation.</text>
</comment>
<comment type="domain">
    <text evidence="1">Both zinc fingers are required to induce development.</text>
</comment>
<comment type="disruption phenotype">
    <text evidence="4">Leads to immature conidiophores without phialides.</text>
</comment>
<sequence length="368" mass="41321">MQFESDFRFDMDDSFSMCSQTLPCPSAGSSFSSASSAYEPFTPTSRRSTPNELSLDFEGAYNPFATHHSELTSPSGHMSKYMFGGPVKGEPEHMSFNEALPTTPMKKLDGMVTPDYDHMLEMNLASRHSIGSITPSGSFPMYTISPTTMGPTSFMMTPTHSLSGSEIAESTSSWSCSNESPISFFPQRGLGPLELEGLDMDRHPQSPLGTYHLHAPPSPGRLRAHRKMMVHEIQRKTNELQRAQIRASRKVSGSKSDGGVDVVRRAMCKCDYPGCHKAFRRNEHLKRHKQTFHGEGPNRFSCEFCGKDQFNRQDNLNNHRKLHARPNSRNRGVEFIPAAVPIIEQEERSRKRRAPPKSKSADKRVDDY</sequence>
<feature type="chain" id="PRO_0000445755" description="C2H2 type master regulator of conidiophore development BrlA">
    <location>
        <begin position="1"/>
        <end position="368"/>
    </location>
</feature>
<feature type="zinc finger region" description="C2H2-type 1; degenerate" evidence="2">
    <location>
        <begin position="268"/>
        <end position="292"/>
    </location>
</feature>
<feature type="zinc finger region" description="C2H2-type 2" evidence="2">
    <location>
        <begin position="300"/>
        <end position="323"/>
    </location>
</feature>
<feature type="region of interest" description="Disordered" evidence="3">
    <location>
        <begin position="338"/>
        <end position="368"/>
    </location>
</feature>
<feature type="compositionally biased region" description="Basic and acidic residues" evidence="3">
    <location>
        <begin position="359"/>
        <end position="368"/>
    </location>
</feature>
<reference key="1">
    <citation type="journal article" date="2011" name="PLoS Genet.">
        <title>Genome sequencing and comparative transcriptomics of the model entomopathogenic fungi Metarhizium anisopliae and M. acridum.</title>
        <authorList>
            <person name="Gao Q."/>
            <person name="Jin K."/>
            <person name="Ying S.-H."/>
            <person name="Zhang Y."/>
            <person name="Xiao G."/>
            <person name="Shang Y."/>
            <person name="Duan Z."/>
            <person name="Hu X."/>
            <person name="Xie X.-Q."/>
            <person name="Zhou G."/>
            <person name="Peng G."/>
            <person name="Luo Z."/>
            <person name="Huang W."/>
            <person name="Wang B."/>
            <person name="Fang W."/>
            <person name="Wang S."/>
            <person name="Zhong Y."/>
            <person name="Ma L.-J."/>
            <person name="St Leger R.J."/>
            <person name="Zhao G.-P."/>
            <person name="Pei Y."/>
            <person name="Feng M.-G."/>
            <person name="Xia Y."/>
            <person name="Wang C."/>
        </authorList>
    </citation>
    <scope>NUCLEOTIDE SEQUENCE [LARGE SCALE GENOMIC DNA]</scope>
    <source>
        <strain>ARSEF 23 / ATCC MYA-3075</strain>
    </source>
</reference>
<reference key="2">
    <citation type="journal article" date="2014" name="Proc. Natl. Acad. Sci. U.S.A.">
        <title>Trajectory and genomic determinants of fungal-pathogen speciation and host adaptation.</title>
        <authorList>
            <person name="Hu X."/>
            <person name="Xiao G."/>
            <person name="Zheng P."/>
            <person name="Shang Y."/>
            <person name="Su Y."/>
            <person name="Zhang X."/>
            <person name="Liu X."/>
            <person name="Zhan S."/>
            <person name="St Leger R.J."/>
            <person name="Wang C."/>
        </authorList>
    </citation>
    <scope>GENOME REANNOTATION</scope>
    <source>
        <strain>ARSEF 23 / ATCC MYA-3075</strain>
    </source>
</reference>
<reference key="3">
    <citation type="journal article" date="2018" name="PLoS Genet.">
        <title>Duplication of a Pks gene cluster and subsequent functional diversification facilitate environmental adaptation in Metarhizium species.</title>
        <authorList>
            <person name="Zeng G."/>
            <person name="Zhang P."/>
            <person name="Zhang Q."/>
            <person name="Zhao H."/>
            <person name="Li Z."/>
            <person name="Zhang X."/>
            <person name="Wang C."/>
            <person name="Yin W.B."/>
            <person name="Fang W."/>
        </authorList>
    </citation>
    <scope>IDENTIFICATION</scope>
    <scope>DISRUPTION PHENOTYPE</scope>
    <scope>FUNCTION</scope>
    <scope>INDUCTION</scope>
</reference>
<gene>
    <name evidence="5" type="primary">BrlA</name>
    <name type="ORF">MAA_10599</name>
</gene>
<evidence type="ECO:0000250" key="1">
    <source>
        <dbReference type="UniProtKB" id="P10069"/>
    </source>
</evidence>
<evidence type="ECO:0000255" key="2">
    <source>
        <dbReference type="PROSITE-ProRule" id="PRU00042"/>
    </source>
</evidence>
<evidence type="ECO:0000256" key="3">
    <source>
        <dbReference type="SAM" id="MobiDB-lite"/>
    </source>
</evidence>
<evidence type="ECO:0000269" key="4">
    <source>
    </source>
</evidence>
<evidence type="ECO:0000303" key="5">
    <source>
    </source>
</evidence>
<evidence type="ECO:0000305" key="6"/>
<proteinExistence type="evidence at transcript level"/>
<dbReference type="EMBL" id="ADNJ02000001">
    <property type="protein sequence ID" value="KHO11655.1"/>
    <property type="molecule type" value="Genomic_DNA"/>
</dbReference>
<dbReference type="RefSeq" id="XP_011410619.1">
    <property type="nucleotide sequence ID" value="XM_011412317.1"/>
</dbReference>
<dbReference type="SMR" id="A0A0B2XG51"/>
<dbReference type="GeneID" id="19264885"/>
<dbReference type="KEGG" id="maj:MAA_10599"/>
<dbReference type="HOGENOM" id="CLU_064755_0_0_1"/>
<dbReference type="OrthoDB" id="10018191at2759"/>
<dbReference type="Proteomes" id="UP000002498">
    <property type="component" value="Unassembled WGS sequence"/>
</dbReference>
<dbReference type="GO" id="GO:0005634">
    <property type="term" value="C:nucleus"/>
    <property type="evidence" value="ECO:0007669"/>
    <property type="project" value="UniProtKB-SubCell"/>
</dbReference>
<dbReference type="GO" id="GO:0000981">
    <property type="term" value="F:DNA-binding transcription factor activity, RNA polymerase II-specific"/>
    <property type="evidence" value="ECO:0007669"/>
    <property type="project" value="TreeGrafter"/>
</dbReference>
<dbReference type="GO" id="GO:0000978">
    <property type="term" value="F:RNA polymerase II cis-regulatory region sequence-specific DNA binding"/>
    <property type="evidence" value="ECO:0007669"/>
    <property type="project" value="TreeGrafter"/>
</dbReference>
<dbReference type="GO" id="GO:0008270">
    <property type="term" value="F:zinc ion binding"/>
    <property type="evidence" value="ECO:0007669"/>
    <property type="project" value="UniProtKB-KW"/>
</dbReference>
<dbReference type="GO" id="GO:0048315">
    <property type="term" value="P:conidium formation"/>
    <property type="evidence" value="ECO:0007669"/>
    <property type="project" value="UniProtKB-KW"/>
</dbReference>
<dbReference type="GO" id="GO:0030435">
    <property type="term" value="P:sporulation resulting in formation of a cellular spore"/>
    <property type="evidence" value="ECO:0007669"/>
    <property type="project" value="UniProtKB-KW"/>
</dbReference>
<dbReference type="Gene3D" id="3.30.160.60">
    <property type="entry name" value="Classic Zinc Finger"/>
    <property type="match status" value="2"/>
</dbReference>
<dbReference type="InterPro" id="IPR036236">
    <property type="entry name" value="Znf_C2H2_sf"/>
</dbReference>
<dbReference type="InterPro" id="IPR013087">
    <property type="entry name" value="Znf_C2H2_type"/>
</dbReference>
<dbReference type="PANTHER" id="PTHR23235">
    <property type="entry name" value="KRUEPPEL-LIKE TRANSCRIPTION FACTOR"/>
    <property type="match status" value="1"/>
</dbReference>
<dbReference type="PANTHER" id="PTHR23235:SF120">
    <property type="entry name" value="KRUPPEL-LIKE FACTOR 15"/>
    <property type="match status" value="1"/>
</dbReference>
<dbReference type="SMART" id="SM00355">
    <property type="entry name" value="ZnF_C2H2"/>
    <property type="match status" value="2"/>
</dbReference>
<dbReference type="SUPFAM" id="SSF57667">
    <property type="entry name" value="beta-beta-alpha zinc fingers"/>
    <property type="match status" value="1"/>
</dbReference>
<dbReference type="PROSITE" id="PS00028">
    <property type="entry name" value="ZINC_FINGER_C2H2_1"/>
    <property type="match status" value="1"/>
</dbReference>
<dbReference type="PROSITE" id="PS50157">
    <property type="entry name" value="ZINC_FINGER_C2H2_2"/>
    <property type="match status" value="1"/>
</dbReference>